<sequence>MMEGLLWILLSVIIASVHGSRLKTPALPIQPEREPMISKGLSGCSFGGRFYSLEDTWHPDLGEPFGVMHCVMCHCEPQRSRRGKVFGKVSCRNMKQDCPDPTCDDPVLLPGHCCKTCPKGDSGRKEVESLFDFFQEKDDDLHKSYNDRSYISSEDTSTRDSTTTDFVALLTGVTDSWLPSSSGVARARFTLSRTSLTFSITFQRINRPSLIAFLDTDGNTAFEFRVPQADNDMICGIWKNVPKPHMRQLEAEQLHVSMTTADNRKEELQGRIIKHRALFAETFSAILTSDEVHSGMGGIAMLTLSDTENNLHFILIMQGLVPPGSSKVPVRVKLQYRQHLLREIRANITADDSDFAEVLADLNSRELFWLSRGQLQISVQTEGQTLRHISGFISGRRSCDTLQSVLSSGAALTAGQTGGVGSAVFTLHPNGSLDYQLLVAGLSSAVLSVSIEMKPRRRNKRSVLYELSAVFTDQRAAGSCGRVEARHTHMLLQNELFINIATALQPDGELRGQIRLLPYNGLDARRNELPVPLAGVLVSPPVRTGAAGHAWVSVDPQCHLHYEIIVNGLSKSEDASISAHLHGLAEIGEMDDSSTNHKRLLTGFYGQQAQGVLKDISVELLRHLNEGTAYLQVSTKMNPRGEIRGRIHVPNHCESPAPRAEFLEEPEFEDLLFTREPTELRKDTHTHVHSCFFEGEQHTHGSQWTPQYNTCFTCTCQKKTVICDPVMCPTLSCTHTVQPEDQCCPICEEKKESKETAAVEKVEENPEGCYFEGDQKMHAPGTTWHPFVPPFGYIKCAVCTCKGSTGEVHCEKVTCPPLTCSRPIRRNPSDCCKECPPEETPPLEDEEMMQADGTRLCKFGKNYYQNSEHWHPSVPLVGEMKCITCWCDHGVTKCQRKQCPLLSCRNPIRTEGKCCPECIEDFMEKEEMAKMAEKKKSWRH</sequence>
<proteinExistence type="evidence at transcript level"/>
<reference key="1">
    <citation type="journal article" date="1997" name="Dev. Biol.">
        <title>Differential regulation of chordin expression domains in mutant zebrafish.</title>
        <authorList>
            <person name="Miller-Bertoglio V.E."/>
            <person name="Fisher S."/>
            <person name="Sanchez A."/>
            <person name="Mullins M.C."/>
            <person name="Halpern M.E."/>
        </authorList>
    </citation>
    <scope>NUCLEOTIDE SEQUENCE [MRNA]</scope>
    <scope>FUNCTION</scope>
    <scope>DEVELOPMENTAL STAGE</scope>
    <source>
        <tissue>Embryo</tissue>
    </source>
</reference>
<reference key="2">
    <citation type="submission" date="2000-05" db="EMBL/GenBank/DDBJ databases">
        <title>Regulation of chordino.</title>
        <authorList>
            <person name="Fujii R."/>
            <person name="Hibi M."/>
            <person name="Hirano T."/>
            <person name="Shimizu T."/>
        </authorList>
    </citation>
    <scope>NUCLEOTIDE SEQUENCE [GENOMIC DNA] OF 1-42</scope>
</reference>
<reference key="3">
    <citation type="journal article" date="2009" name="PLoS ONE">
        <title>Heritable and lineage-specific gene knockdown in zebrafish embryo.</title>
        <authorList>
            <person name="Dong M."/>
            <person name="Fu Y.F."/>
            <person name="Du T.T."/>
            <person name="Jing C.B."/>
            <person name="Fu C.T."/>
            <person name="Chen Y."/>
            <person name="Jin Y."/>
            <person name="Deng M."/>
            <person name="Liu T.X."/>
        </authorList>
    </citation>
    <scope>DEVELOPMENTAL STAGE</scope>
</reference>
<accession>O57472</accession>
<accession>Q9DED8</accession>
<dbReference type="EMBL" id="AF034606">
    <property type="protein sequence ID" value="AAB93485.1"/>
    <property type="molecule type" value="mRNA"/>
</dbReference>
<dbReference type="EMBL" id="AB043968">
    <property type="protein sequence ID" value="BAB18642.1"/>
    <property type="molecule type" value="Genomic_DNA"/>
</dbReference>
<dbReference type="SMR" id="O57472"/>
<dbReference type="FunCoup" id="O57472">
    <property type="interactions" value="1002"/>
</dbReference>
<dbReference type="STRING" id="7955.ENSDARP00000045109"/>
<dbReference type="GlyCosmos" id="O57472">
    <property type="glycosylation" value="2 sites, No reported glycans"/>
</dbReference>
<dbReference type="PaxDb" id="7955-ENSDARP00000045109"/>
<dbReference type="AGR" id="ZFIN:ZDB-GENE-990415-33"/>
<dbReference type="ZFIN" id="ZDB-GENE-990415-33">
    <property type="gene designation" value="chrd"/>
</dbReference>
<dbReference type="eggNOG" id="ENOG502QR4J">
    <property type="taxonomic scope" value="Eukaryota"/>
</dbReference>
<dbReference type="InParanoid" id="O57472"/>
<dbReference type="PhylomeDB" id="O57472"/>
<dbReference type="PRO" id="PR:O57472"/>
<dbReference type="Proteomes" id="UP000000437">
    <property type="component" value="Unplaced"/>
</dbReference>
<dbReference type="GO" id="GO:0005615">
    <property type="term" value="C:extracellular space"/>
    <property type="evidence" value="ECO:0000318"/>
    <property type="project" value="GO_Central"/>
</dbReference>
<dbReference type="GO" id="GO:0036122">
    <property type="term" value="F:BMP binding"/>
    <property type="evidence" value="ECO:0000318"/>
    <property type="project" value="GO_Central"/>
</dbReference>
<dbReference type="GO" id="GO:0009948">
    <property type="term" value="P:anterior/posterior axis specification"/>
    <property type="evidence" value="ECO:0000314"/>
    <property type="project" value="ZFIN"/>
</dbReference>
<dbReference type="GO" id="GO:0035143">
    <property type="term" value="P:caudal fin morphogenesis"/>
    <property type="evidence" value="ECO:0000315"/>
    <property type="project" value="ZFIN"/>
</dbReference>
<dbReference type="GO" id="GO:0061371">
    <property type="term" value="P:determination of heart left/right asymmetry"/>
    <property type="evidence" value="ECO:0000315"/>
    <property type="project" value="ZFIN"/>
</dbReference>
<dbReference type="GO" id="GO:0007368">
    <property type="term" value="P:determination of left/right symmetry"/>
    <property type="evidence" value="ECO:0000315"/>
    <property type="project" value="ZFIN"/>
</dbReference>
<dbReference type="GO" id="GO:0048264">
    <property type="term" value="P:determination of ventral identity"/>
    <property type="evidence" value="ECO:0000315"/>
    <property type="project" value="ZFIN"/>
</dbReference>
<dbReference type="GO" id="GO:0060030">
    <property type="term" value="P:dorsal convergence"/>
    <property type="evidence" value="ECO:0000316"/>
    <property type="project" value="ZFIN"/>
</dbReference>
<dbReference type="GO" id="GO:0009953">
    <property type="term" value="P:dorsal/ventral pattern formation"/>
    <property type="evidence" value="ECO:0000315"/>
    <property type="project" value="ZFIN"/>
</dbReference>
<dbReference type="GO" id="GO:0003143">
    <property type="term" value="P:embryonic heart tube morphogenesis"/>
    <property type="evidence" value="ECO:0000315"/>
    <property type="project" value="ZFIN"/>
</dbReference>
<dbReference type="GO" id="GO:0035162">
    <property type="term" value="P:embryonic hemopoiesis"/>
    <property type="evidence" value="ECO:0000315"/>
    <property type="project" value="ZFIN"/>
</dbReference>
<dbReference type="GO" id="GO:0001947">
    <property type="term" value="P:heart looping"/>
    <property type="evidence" value="ECO:0000315"/>
    <property type="project" value="ZFIN"/>
</dbReference>
<dbReference type="GO" id="GO:0070121">
    <property type="term" value="P:Kupffer's vesicle development"/>
    <property type="evidence" value="ECO:0000315"/>
    <property type="project" value="ZFIN"/>
</dbReference>
<dbReference type="GO" id="GO:0030514">
    <property type="term" value="P:negative regulation of BMP signaling pathway"/>
    <property type="evidence" value="ECO:0000314"/>
    <property type="project" value="ZFIN"/>
</dbReference>
<dbReference type="GO" id="GO:0043049">
    <property type="term" value="P:otic placode formation"/>
    <property type="evidence" value="ECO:0000316"/>
    <property type="project" value="ZFIN"/>
</dbReference>
<dbReference type="GO" id="GO:0030510">
    <property type="term" value="P:regulation of BMP signaling pathway"/>
    <property type="evidence" value="ECO:0000315"/>
    <property type="project" value="ZFIN"/>
</dbReference>
<dbReference type="GO" id="GO:0001756">
    <property type="term" value="P:somitogenesis"/>
    <property type="evidence" value="ECO:0000315"/>
    <property type="project" value="ZFIN"/>
</dbReference>
<dbReference type="GO" id="GO:0010159">
    <property type="term" value="P:specification of animal organ position"/>
    <property type="evidence" value="ECO:0000315"/>
    <property type="project" value="ZFIN"/>
</dbReference>
<dbReference type="Gene3D" id="6.20.200.20">
    <property type="match status" value="3"/>
</dbReference>
<dbReference type="InterPro" id="IPR016353">
    <property type="entry name" value="Chordin"/>
</dbReference>
<dbReference type="InterPro" id="IPR052278">
    <property type="entry name" value="Chordin-like_regulators"/>
</dbReference>
<dbReference type="InterPro" id="IPR010895">
    <property type="entry name" value="CHRD"/>
</dbReference>
<dbReference type="InterPro" id="IPR001007">
    <property type="entry name" value="VWF_dom"/>
</dbReference>
<dbReference type="PANTHER" id="PTHR46526">
    <property type="entry name" value="CHORDIN"/>
    <property type="match status" value="1"/>
</dbReference>
<dbReference type="PANTHER" id="PTHR46526:SF1">
    <property type="entry name" value="CHORDIN"/>
    <property type="match status" value="1"/>
</dbReference>
<dbReference type="Pfam" id="PF07452">
    <property type="entry name" value="CHRD"/>
    <property type="match status" value="3"/>
</dbReference>
<dbReference type="Pfam" id="PF00093">
    <property type="entry name" value="VWC"/>
    <property type="match status" value="4"/>
</dbReference>
<dbReference type="PIRSF" id="PIRSF002496">
    <property type="entry name" value="Chordin"/>
    <property type="match status" value="1"/>
</dbReference>
<dbReference type="SMART" id="SM00754">
    <property type="entry name" value="CHRD"/>
    <property type="match status" value="4"/>
</dbReference>
<dbReference type="SMART" id="SM00214">
    <property type="entry name" value="VWC"/>
    <property type="match status" value="4"/>
</dbReference>
<dbReference type="SUPFAM" id="SSF57603">
    <property type="entry name" value="FnI-like domain"/>
    <property type="match status" value="4"/>
</dbReference>
<dbReference type="PROSITE" id="PS50933">
    <property type="entry name" value="CHRD"/>
    <property type="match status" value="4"/>
</dbReference>
<dbReference type="PROSITE" id="PS01208">
    <property type="entry name" value="VWFC_1"/>
    <property type="match status" value="3"/>
</dbReference>
<dbReference type="PROSITE" id="PS50184">
    <property type="entry name" value="VWFC_2"/>
    <property type="match status" value="4"/>
</dbReference>
<comment type="function">
    <text evidence="1 6">Dorsalizing factor. Key developmental protein that dorsalizes early vertebrate embryonic tissues by binding to ventralizing TGF-beta family bone morphogenetic proteins (BMPs) and sequestering them in latent complexes (By similarity).</text>
</comment>
<comment type="subunit">
    <text evidence="1">Interacts with twsg1 and/or bmp4.</text>
</comment>
<comment type="subcellular location">
    <subcellularLocation>
        <location evidence="1">Secreted</location>
    </subcellularLocation>
</comment>
<comment type="developmental stage">
    <text evidence="5 6">Initially expressed at the future dorsal side of the late blastula at 4 hpf, during early gastrulation (6 hpf) expression is restricted to the deep cells in the embryonic shield (PubMed:9441687). Expressed transiently as gastrulation proceeds in the axis and in bilateral domains in all ectoderm and mesoderm layers, except the layer closest to the yolk from 6 to 8 hpf (PubMed:9441687). Expressed in the dorsal shield at 6 hpf (PubMed:19582161). Expressed in the notochord and decreased in the axis, bilateral expression remains specific to the posterior region at 9 hpf. During late gastrulation, expressed in discrete domains in the forebrain, midbrain and rhombomere in the hindbrain at 10 hpf (PubMed:9441687). Expression persists throughout early somitogenesis but decreases by the 20-somite stage at 19 hpf. No expression was detected in embryos at 24 hpf (PubMed:9441687).</text>
</comment>
<comment type="PTM">
    <text evidence="1">Cleaved by tolloid proteases; cleavage participates in dorsoventral patterning during early development.</text>
</comment>
<comment type="similarity">
    <text evidence="7">Belongs to the chordin family.</text>
</comment>
<protein>
    <recommendedName>
        <fullName>Chordin</fullName>
    </recommendedName>
    <alternativeName>
        <fullName>Protein chordino</fullName>
    </alternativeName>
</protein>
<name>CHRD_DANRE</name>
<evidence type="ECO:0000250" key="1"/>
<evidence type="ECO:0000255" key="2"/>
<evidence type="ECO:0000255" key="3">
    <source>
        <dbReference type="PROSITE-ProRule" id="PRU00220"/>
    </source>
</evidence>
<evidence type="ECO:0000255" key="4">
    <source>
        <dbReference type="PROSITE-ProRule" id="PRU00230"/>
    </source>
</evidence>
<evidence type="ECO:0000269" key="5">
    <source>
    </source>
</evidence>
<evidence type="ECO:0000269" key="6">
    <source>
    </source>
</evidence>
<evidence type="ECO:0000305" key="7"/>
<feature type="signal peptide" evidence="2">
    <location>
        <begin position="1"/>
        <end position="19"/>
    </location>
</feature>
<feature type="chain" id="PRO_0000005366" description="Chordin">
    <location>
        <begin position="20"/>
        <end position="940"/>
    </location>
</feature>
<feature type="domain" description="VWFC 1" evidence="3">
    <location>
        <begin position="42"/>
        <end position="118"/>
    </location>
</feature>
<feature type="domain" description="CHRD 1" evidence="4">
    <location>
        <begin position="162"/>
        <end position="277"/>
    </location>
</feature>
<feature type="domain" description="CHRD 2" evidence="4">
    <location>
        <begin position="279"/>
        <end position="398"/>
    </location>
</feature>
<feature type="domain" description="CHRD 3" evidence="4">
    <location>
        <begin position="404"/>
        <end position="519"/>
    </location>
</feature>
<feature type="domain" description="CHRD 4" evidence="4">
    <location>
        <begin position="525"/>
        <end position="652"/>
    </location>
</feature>
<feature type="domain" description="VWFC 2" evidence="3">
    <location>
        <begin position="689"/>
        <end position="748"/>
    </location>
</feature>
<feature type="domain" description="VWFC 3" evidence="3">
    <location>
        <begin position="767"/>
        <end position="836"/>
    </location>
</feature>
<feature type="domain" description="VWFC 4" evidence="3">
    <location>
        <begin position="855"/>
        <end position="919"/>
    </location>
</feature>
<feature type="glycosylation site" description="N-linked (GlcNAc...) asparagine" evidence="2">
    <location>
        <position position="347"/>
    </location>
</feature>
<feature type="glycosylation site" description="N-linked (GlcNAc...) asparagine" evidence="2">
    <location>
        <position position="430"/>
    </location>
</feature>
<keyword id="KW-0217">Developmental protein</keyword>
<keyword id="KW-0325">Glycoprotein</keyword>
<keyword id="KW-1185">Reference proteome</keyword>
<keyword id="KW-0677">Repeat</keyword>
<keyword id="KW-0964">Secreted</keyword>
<keyword id="KW-0732">Signal</keyword>
<organism>
    <name type="scientific">Danio rerio</name>
    <name type="common">Zebrafish</name>
    <name type="synonym">Brachydanio rerio</name>
    <dbReference type="NCBI Taxonomy" id="7955"/>
    <lineage>
        <taxon>Eukaryota</taxon>
        <taxon>Metazoa</taxon>
        <taxon>Chordata</taxon>
        <taxon>Craniata</taxon>
        <taxon>Vertebrata</taxon>
        <taxon>Euteleostomi</taxon>
        <taxon>Actinopterygii</taxon>
        <taxon>Neopterygii</taxon>
        <taxon>Teleostei</taxon>
        <taxon>Ostariophysi</taxon>
        <taxon>Cypriniformes</taxon>
        <taxon>Danionidae</taxon>
        <taxon>Danioninae</taxon>
        <taxon>Danio</taxon>
    </lineage>
</organism>
<gene>
    <name type="primary">chd</name>
    <name type="synonym">chrd</name>
</gene>